<keyword id="KW-1003">Cell membrane</keyword>
<keyword id="KW-0406">Ion transport</keyword>
<keyword id="KW-0464">Manganese</keyword>
<keyword id="KW-0472">Membrane</keyword>
<keyword id="KW-1185">Reference proteome</keyword>
<keyword id="KW-0812">Transmembrane</keyword>
<keyword id="KW-1133">Transmembrane helix</keyword>
<keyword id="KW-0813">Transport</keyword>
<proteinExistence type="inferred from homology"/>
<organism>
    <name type="scientific">Bacillus licheniformis (strain ATCC 14580 / DSM 13 / JCM 2505 / CCUG 7422 / NBRC 12200 / NCIMB 9375 / NCTC 10341 / NRRL NRS-1264 / Gibson 46)</name>
    <dbReference type="NCBI Taxonomy" id="279010"/>
    <lineage>
        <taxon>Bacteria</taxon>
        <taxon>Bacillati</taxon>
        <taxon>Bacillota</taxon>
        <taxon>Bacilli</taxon>
        <taxon>Bacillales</taxon>
        <taxon>Bacillaceae</taxon>
        <taxon>Bacillus</taxon>
    </lineage>
</organism>
<reference key="1">
    <citation type="journal article" date="2004" name="J. Mol. Microbiol. Biotechnol.">
        <title>The complete genome sequence of Bacillus licheniformis DSM13, an organism with great industrial potential.</title>
        <authorList>
            <person name="Veith B."/>
            <person name="Herzberg C."/>
            <person name="Steckel S."/>
            <person name="Feesche J."/>
            <person name="Maurer K.H."/>
            <person name="Ehrenreich P."/>
            <person name="Baeumer S."/>
            <person name="Henne A."/>
            <person name="Liesegang H."/>
            <person name="Merkl R."/>
            <person name="Ehrenreich A."/>
            <person name="Gottschalk G."/>
        </authorList>
    </citation>
    <scope>NUCLEOTIDE SEQUENCE [LARGE SCALE GENOMIC DNA]</scope>
    <source>
        <strain>ATCC 14580 / DSM 13 / JCM 2505 / CCUG 7422 / NBRC 12200 / NCIMB 9375 / NCTC 10341 / NRRL NRS-1264 / Gibson 46</strain>
    </source>
</reference>
<reference key="2">
    <citation type="journal article" date="2004" name="Genome Biol.">
        <title>Complete genome sequence of the industrial bacterium Bacillus licheniformis and comparisons with closely related Bacillus species.</title>
        <authorList>
            <person name="Rey M.W."/>
            <person name="Ramaiya P."/>
            <person name="Nelson B.A."/>
            <person name="Brody-Karpin S.D."/>
            <person name="Zaretsky E.J."/>
            <person name="Tang M."/>
            <person name="Lopez de Leon A."/>
            <person name="Xiang H."/>
            <person name="Gusti V."/>
            <person name="Clausen I.G."/>
            <person name="Olsen P.B."/>
            <person name="Rasmussen M.D."/>
            <person name="Andersen J.T."/>
            <person name="Joergensen P.L."/>
            <person name="Larsen T.S."/>
            <person name="Sorokin A."/>
            <person name="Bolotin A."/>
            <person name="Lapidus A."/>
            <person name="Galleron N."/>
            <person name="Ehrlich S.D."/>
            <person name="Berka R.M."/>
        </authorList>
    </citation>
    <scope>NUCLEOTIDE SEQUENCE [LARGE SCALE GENOMIC DNA]</scope>
    <source>
        <strain>ATCC 14580 / DSM 13 / JCM 2505 / CCUG 7422 / NBRC 12200 / NCIMB 9375 / NCTC 10341 / NRRL NRS-1264 / Gibson 46</strain>
    </source>
</reference>
<sequence>MNVDVLIGEILTLSMMAFALGMDAFSVGLGMGMAKLKRNQVFQIGVIIGLFHVIMPLGGMIAGQFLSGALGALAGYIGGALLLVLGIQMIVASFNKSGEQIISPHGFGLFVFAVGVSLDSFSVGLSLGLYGTKPILTIFLFGLFSMVLTWAGLLLGKKVQTWLGAYSEALGGAILLSFGLKLLLPI</sequence>
<gene>
    <name evidence="1" type="primary">mntP</name>
    <name type="ordered locus">BLi03939</name>
    <name type="ordered locus">BL03987</name>
</gene>
<evidence type="ECO:0000255" key="1">
    <source>
        <dbReference type="HAMAP-Rule" id="MF_01521"/>
    </source>
</evidence>
<comment type="function">
    <text evidence="1">Probably functions as a manganese efflux pump.</text>
</comment>
<comment type="subcellular location">
    <subcellularLocation>
        <location evidence="1">Cell membrane</location>
        <topology evidence="1">Multi-pass membrane protein</topology>
    </subcellularLocation>
</comment>
<comment type="similarity">
    <text evidence="1">Belongs to the MntP (TC 9.B.29) family.</text>
</comment>
<accession>Q65DW1</accession>
<feature type="chain" id="PRO_0000155635" description="Putative manganese efflux pump MntP">
    <location>
        <begin position="1"/>
        <end position="186"/>
    </location>
</feature>
<feature type="transmembrane region" description="Helical" evidence="1">
    <location>
        <begin position="5"/>
        <end position="25"/>
    </location>
</feature>
<feature type="transmembrane region" description="Helical" evidence="1">
    <location>
        <begin position="41"/>
        <end position="61"/>
    </location>
</feature>
<feature type="transmembrane region" description="Helical" evidence="1">
    <location>
        <begin position="72"/>
        <end position="92"/>
    </location>
</feature>
<feature type="transmembrane region" description="Helical" evidence="1">
    <location>
        <begin position="107"/>
        <end position="127"/>
    </location>
</feature>
<feature type="transmembrane region" description="Helical" evidence="1">
    <location>
        <begin position="135"/>
        <end position="155"/>
    </location>
</feature>
<feature type="transmembrane region" description="Helical" evidence="1">
    <location>
        <begin position="166"/>
        <end position="186"/>
    </location>
</feature>
<protein>
    <recommendedName>
        <fullName evidence="1">Putative manganese efflux pump MntP</fullName>
    </recommendedName>
</protein>
<dbReference type="EMBL" id="AE017333">
    <property type="protein sequence ID" value="AAU42753.1"/>
    <property type="molecule type" value="Genomic_DNA"/>
</dbReference>
<dbReference type="EMBL" id="CP000002">
    <property type="protein sequence ID" value="AAU25378.1"/>
    <property type="molecule type" value="Genomic_DNA"/>
</dbReference>
<dbReference type="RefSeq" id="WP_003186024.1">
    <property type="nucleotide sequence ID" value="NC_006322.1"/>
</dbReference>
<dbReference type="STRING" id="279010.BL03987"/>
<dbReference type="KEGG" id="bld:BLi03939"/>
<dbReference type="KEGG" id="bli:BL03987"/>
<dbReference type="eggNOG" id="COG1971">
    <property type="taxonomic scope" value="Bacteria"/>
</dbReference>
<dbReference type="HOGENOM" id="CLU_096410_1_0_9"/>
<dbReference type="Proteomes" id="UP000000606">
    <property type="component" value="Chromosome"/>
</dbReference>
<dbReference type="GO" id="GO:0005886">
    <property type="term" value="C:plasma membrane"/>
    <property type="evidence" value="ECO:0007669"/>
    <property type="project" value="UniProtKB-SubCell"/>
</dbReference>
<dbReference type="GO" id="GO:0005384">
    <property type="term" value="F:manganese ion transmembrane transporter activity"/>
    <property type="evidence" value="ECO:0007669"/>
    <property type="project" value="UniProtKB-UniRule"/>
</dbReference>
<dbReference type="HAMAP" id="MF_01521">
    <property type="entry name" value="MntP_pump"/>
    <property type="match status" value="1"/>
</dbReference>
<dbReference type="InterPro" id="IPR003810">
    <property type="entry name" value="Mntp/YtaF"/>
</dbReference>
<dbReference type="InterPro" id="IPR022929">
    <property type="entry name" value="Put_MntP"/>
</dbReference>
<dbReference type="PANTHER" id="PTHR35529">
    <property type="entry name" value="MANGANESE EFFLUX PUMP MNTP-RELATED"/>
    <property type="match status" value="1"/>
</dbReference>
<dbReference type="PANTHER" id="PTHR35529:SF1">
    <property type="entry name" value="MANGANESE EFFLUX PUMP MNTP-RELATED"/>
    <property type="match status" value="1"/>
</dbReference>
<dbReference type="Pfam" id="PF02659">
    <property type="entry name" value="Mntp"/>
    <property type="match status" value="1"/>
</dbReference>
<name>MNTP_BACLD</name>